<sequence length="951" mass="107356">MMTSNILSRFLPPNGSPSVYETIRNHDATSDSSDVEERAGLTLEDGPGEHYSDRELEDAMADAGRSRLLDRDDAFISRRSPRKASVAGPSKSNSRRRHFSRPRWAHDASPSHDFEDGDDDVPASLLVEGHHDDDELKSRLPPPPTSHITPDDRQPSRPGPSTRGVRGRGRAAKEQQPLHHADRRRAPAVRWSLGQPNLNTVDPKEKAMWMWANVENLDNFLKEVYTYFLGNGIWSILLNRVLSLLTFAFVVGFSTFLTNCIDYHKVRGSKSLNDILIKQCTTKMSLSSTFLLWLLTLFWIGKAFQCLLDIRRLKHMHDFYYYLLGVSDTDIQTISWQEIVSRLMTLRDANPATAGAVSARHRKFMGSQSKQRMDAHDIANRLMRKENYLIALINKDILDLTLPIPFLRNKQLFSRTLEWNINLCIMDYVFNEQGQVRTLFLKDTHRKALSEGLRRRFIFAGIMNIFVAPFIVVYFMMHYFFRYFNEYKKNPSQIGSRQYTPLAEWKFREFNELWHLFERRINMSYPFASRYVDQFPKDKTVQVAGFVAFVSGALASVLALASIVDPELFLGFEITHDRTVLFYLGVFGSVWAVARGLVPEETTVFDPEYALLEVINYTHYAPSHWKGRLHSDEVRREFTELYQMKIVIFLEEILSMIFTPFILWFNLPKCSDRLIDFFREFTVHVDGMGYLCSFAVFDFKKGTNVINQGDRRDPARQDLRADYFSTKDGKMLASYYGFLDNYGANHRGSHPATRRQFYPPPAFPTLGSPPAGEMGTIGDRLDQTQTRHGLAGPFMGQQSVFGPSRYGLTGLGDHASPAPSILLDPHHQPSTSGFRGTSRAAGVQRYRSSRAHPPISGTIADGDESPVATGRSDPSRPAANAAGASSAGGVGTSDSNLGDSWRMNLVEDGDDDNTEGGENVDAIAGGAGVLGLIQQFQRVNKDSRGRTAVGL</sequence>
<gene>
    <name type="primary">atg9</name>
    <name type="ORF">AFUA_6G12350</name>
</gene>
<comment type="function">
    <text evidence="2">Phospholipid scramblase involved in autophagy and cytoplasm to vacuole transport (Cvt) vesicle formation. Cycles between the preautophagosomal structure/phagophore assembly site (PAS) and the cytoplasmic vesicle pool and supplies membrane for the growing autophagosome. Lipid scramblase activity plays a key role in preautophagosomal structure/phagophore assembly by distributing the phospholipids that arrive through atg2 from the cytoplasmic to the luminal leaflet of the bilayer, thereby driving autophagosomal membrane expansion. Required for mitophagy. Also involved in endoplasmic reticulum-specific autophagic process and is essential for the survival of cells subjected to severe ER stress. Different machineries are required for anterograde trafficking to the PAS during either the Cvt pathway or bulk autophagy and for retrograde trafficking.</text>
</comment>
<comment type="catalytic activity">
    <reaction evidence="2">
        <text>a 1,2-diacyl-sn-glycero-3-phosphocholine(in) = a 1,2-diacyl-sn-glycero-3-phosphocholine(out)</text>
        <dbReference type="Rhea" id="RHEA:38571"/>
        <dbReference type="ChEBI" id="CHEBI:57643"/>
    </reaction>
</comment>
<comment type="catalytic activity">
    <reaction evidence="2">
        <text>a 1,2-diacyl-sn-glycero-3-phospho-L-serine(in) = a 1,2-diacyl-sn-glycero-3-phospho-L-serine(out)</text>
        <dbReference type="Rhea" id="RHEA:38663"/>
        <dbReference type="ChEBI" id="CHEBI:57262"/>
    </reaction>
</comment>
<comment type="catalytic activity">
    <reaction evidence="2">
        <text>a 1,2-diacyl-sn-glycero-3-phosphoethanolamine(in) = a 1,2-diacyl-sn-glycero-3-phosphoethanolamine(out)</text>
        <dbReference type="Rhea" id="RHEA:38895"/>
        <dbReference type="ChEBI" id="CHEBI:64612"/>
    </reaction>
</comment>
<comment type="catalytic activity">
    <reaction evidence="2">
        <text>a 1,2-diacyl-sn-glycero-3-phospho-(1D-myo-inositol-3-phosphate)(in) = a 1,2-diacyl-sn-glycero-3-phospho-(1D-myo-inositol-3-phosphate)(out)</text>
        <dbReference type="Rhea" id="RHEA:67920"/>
        <dbReference type="ChEBI" id="CHEBI:58088"/>
    </reaction>
</comment>
<comment type="subunit">
    <text evidence="1">Homotrimer; forms a homotrimer with a central pore that forms a path between the two membrane leaflets.</text>
</comment>
<comment type="subcellular location">
    <subcellularLocation>
        <location evidence="2">Preautophagosomal structure membrane</location>
        <topology evidence="2">Multi-pass membrane protein</topology>
    </subcellularLocation>
    <subcellularLocation>
        <location evidence="2">Cytoplasmic vesicle membrane</location>
        <topology evidence="2">Multi-pass membrane protein</topology>
    </subcellularLocation>
    <subcellularLocation>
        <location evidence="2">Golgi apparatus membrane</location>
        <topology evidence="2">Multi-pass membrane protein</topology>
    </subcellularLocation>
    <subcellularLocation>
        <location evidence="2">Endoplasmic reticulum membrane</location>
        <topology evidence="2">Multi-pass membrane protein</topology>
    </subcellularLocation>
</comment>
<comment type="domain">
    <text evidence="1">Forms a homotrimer with a solvated central pore, which is connected laterally to the cytosol through the cavity within each protomer. Acts as a lipid scramblase that uses its central pore to function: the central pore opens laterally to accommodate lipid headgroups, thereby enabling lipid flipping and redistribution of lipids added to the outer leaflet of atg9-containing vesicles, thereby enabling growth into autophagosomes.</text>
</comment>
<comment type="PTM">
    <text evidence="2">Phosphorylated by atg1. Atg1 phosphorylation is required for preautophagosome elongation.</text>
</comment>
<comment type="similarity">
    <text evidence="5">Belongs to the ATG9 family.</text>
</comment>
<reference key="1">
    <citation type="journal article" date="2005" name="Nature">
        <title>Genomic sequence of the pathogenic and allergenic filamentous fungus Aspergillus fumigatus.</title>
        <authorList>
            <person name="Nierman W.C."/>
            <person name="Pain A."/>
            <person name="Anderson M.J."/>
            <person name="Wortman J.R."/>
            <person name="Kim H.S."/>
            <person name="Arroyo J."/>
            <person name="Berriman M."/>
            <person name="Abe K."/>
            <person name="Archer D.B."/>
            <person name="Bermejo C."/>
            <person name="Bennett J.W."/>
            <person name="Bowyer P."/>
            <person name="Chen D."/>
            <person name="Collins M."/>
            <person name="Coulsen R."/>
            <person name="Davies R."/>
            <person name="Dyer P.S."/>
            <person name="Farman M.L."/>
            <person name="Fedorova N."/>
            <person name="Fedorova N.D."/>
            <person name="Feldblyum T.V."/>
            <person name="Fischer R."/>
            <person name="Fosker N."/>
            <person name="Fraser A."/>
            <person name="Garcia J.L."/>
            <person name="Garcia M.J."/>
            <person name="Goble A."/>
            <person name="Goldman G.H."/>
            <person name="Gomi K."/>
            <person name="Griffith-Jones S."/>
            <person name="Gwilliam R."/>
            <person name="Haas B.J."/>
            <person name="Haas H."/>
            <person name="Harris D.E."/>
            <person name="Horiuchi H."/>
            <person name="Huang J."/>
            <person name="Humphray S."/>
            <person name="Jimenez J."/>
            <person name="Keller N."/>
            <person name="Khouri H."/>
            <person name="Kitamoto K."/>
            <person name="Kobayashi T."/>
            <person name="Konzack S."/>
            <person name="Kulkarni R."/>
            <person name="Kumagai T."/>
            <person name="Lafton A."/>
            <person name="Latge J.-P."/>
            <person name="Li W."/>
            <person name="Lord A."/>
            <person name="Lu C."/>
            <person name="Majoros W.H."/>
            <person name="May G.S."/>
            <person name="Miller B.L."/>
            <person name="Mohamoud Y."/>
            <person name="Molina M."/>
            <person name="Monod M."/>
            <person name="Mouyna I."/>
            <person name="Mulligan S."/>
            <person name="Murphy L.D."/>
            <person name="O'Neil S."/>
            <person name="Paulsen I."/>
            <person name="Penalva M.A."/>
            <person name="Pertea M."/>
            <person name="Price C."/>
            <person name="Pritchard B.L."/>
            <person name="Quail M.A."/>
            <person name="Rabbinowitsch E."/>
            <person name="Rawlins N."/>
            <person name="Rajandream M.A."/>
            <person name="Reichard U."/>
            <person name="Renauld H."/>
            <person name="Robson G.D."/>
            <person name="Rodriguez de Cordoba S."/>
            <person name="Rodriguez-Pena J.M."/>
            <person name="Ronning C.M."/>
            <person name="Rutter S."/>
            <person name="Salzberg S.L."/>
            <person name="Sanchez M."/>
            <person name="Sanchez-Ferrero J.C."/>
            <person name="Saunders D."/>
            <person name="Seeger K."/>
            <person name="Squares R."/>
            <person name="Squares S."/>
            <person name="Takeuchi M."/>
            <person name="Tekaia F."/>
            <person name="Turner G."/>
            <person name="Vazquez de Aldana C.R."/>
            <person name="Weidman J."/>
            <person name="White O."/>
            <person name="Woodward J.R."/>
            <person name="Yu J.-H."/>
            <person name="Fraser C.M."/>
            <person name="Galagan J.E."/>
            <person name="Asai K."/>
            <person name="Machida M."/>
            <person name="Hall N."/>
            <person name="Barrell B.G."/>
            <person name="Denning D.W."/>
        </authorList>
    </citation>
    <scope>NUCLEOTIDE SEQUENCE [LARGE SCALE GENOMIC DNA]</scope>
    <source>
        <strain>ATCC MYA-4609 / CBS 101355 / FGSC A1100 / Af293</strain>
    </source>
</reference>
<name>ATG9_ASPFU</name>
<keyword id="KW-0072">Autophagy</keyword>
<keyword id="KW-0968">Cytoplasmic vesicle</keyword>
<keyword id="KW-0256">Endoplasmic reticulum</keyword>
<keyword id="KW-0333">Golgi apparatus</keyword>
<keyword id="KW-0445">Lipid transport</keyword>
<keyword id="KW-0472">Membrane</keyword>
<keyword id="KW-0597">Phosphoprotein</keyword>
<keyword id="KW-1185">Reference proteome</keyword>
<keyword id="KW-0812">Transmembrane</keyword>
<keyword id="KW-1133">Transmembrane helix</keyword>
<keyword id="KW-0813">Transport</keyword>
<organism>
    <name type="scientific">Aspergillus fumigatus (strain ATCC MYA-4609 / CBS 101355 / FGSC A1100 / Af293)</name>
    <name type="common">Neosartorya fumigata</name>
    <dbReference type="NCBI Taxonomy" id="330879"/>
    <lineage>
        <taxon>Eukaryota</taxon>
        <taxon>Fungi</taxon>
        <taxon>Dikarya</taxon>
        <taxon>Ascomycota</taxon>
        <taxon>Pezizomycotina</taxon>
        <taxon>Eurotiomycetes</taxon>
        <taxon>Eurotiomycetidae</taxon>
        <taxon>Eurotiales</taxon>
        <taxon>Aspergillaceae</taxon>
        <taxon>Aspergillus</taxon>
        <taxon>Aspergillus subgen. Fumigati</taxon>
    </lineage>
</organism>
<evidence type="ECO:0000250" key="1">
    <source>
        <dbReference type="UniProtKB" id="O74312"/>
    </source>
</evidence>
<evidence type="ECO:0000250" key="2">
    <source>
        <dbReference type="UniProtKB" id="Q12142"/>
    </source>
</evidence>
<evidence type="ECO:0000255" key="3"/>
<evidence type="ECO:0000256" key="4">
    <source>
        <dbReference type="SAM" id="MobiDB-lite"/>
    </source>
</evidence>
<evidence type="ECO:0000305" key="5"/>
<dbReference type="EMBL" id="AAHF01000006">
    <property type="protein sequence ID" value="EAL89075.1"/>
    <property type="molecule type" value="Genomic_DNA"/>
</dbReference>
<dbReference type="RefSeq" id="XP_751113.1">
    <property type="nucleotide sequence ID" value="XM_746020.1"/>
</dbReference>
<dbReference type="SMR" id="Q4WLT9"/>
<dbReference type="FunCoup" id="Q4WLT9">
    <property type="interactions" value="221"/>
</dbReference>
<dbReference type="STRING" id="330879.Q4WLT9"/>
<dbReference type="EnsemblFungi" id="EAL89075">
    <property type="protein sequence ID" value="EAL89075"/>
    <property type="gene ID" value="AFUA_6G12350"/>
</dbReference>
<dbReference type="GeneID" id="3508419"/>
<dbReference type="KEGG" id="afm:AFUA_6G12350"/>
<dbReference type="VEuPathDB" id="FungiDB:Afu6g12350"/>
<dbReference type="eggNOG" id="KOG2173">
    <property type="taxonomic scope" value="Eukaryota"/>
</dbReference>
<dbReference type="HOGENOM" id="CLU_006200_1_1_1"/>
<dbReference type="InParanoid" id="Q4WLT9"/>
<dbReference type="OMA" id="MMHYFFR"/>
<dbReference type="OrthoDB" id="2020634at2759"/>
<dbReference type="Proteomes" id="UP000002530">
    <property type="component" value="Chromosome 6"/>
</dbReference>
<dbReference type="GO" id="GO:0005776">
    <property type="term" value="C:autophagosome"/>
    <property type="evidence" value="ECO:0000318"/>
    <property type="project" value="GO_Central"/>
</dbReference>
<dbReference type="GO" id="GO:0030659">
    <property type="term" value="C:cytoplasmic vesicle membrane"/>
    <property type="evidence" value="ECO:0007669"/>
    <property type="project" value="UniProtKB-SubCell"/>
</dbReference>
<dbReference type="GO" id="GO:0005789">
    <property type="term" value="C:endoplasmic reticulum membrane"/>
    <property type="evidence" value="ECO:0007669"/>
    <property type="project" value="UniProtKB-SubCell"/>
</dbReference>
<dbReference type="GO" id="GO:0000139">
    <property type="term" value="C:Golgi membrane"/>
    <property type="evidence" value="ECO:0007669"/>
    <property type="project" value="UniProtKB-SubCell"/>
</dbReference>
<dbReference type="GO" id="GO:0005739">
    <property type="term" value="C:mitochondrion"/>
    <property type="evidence" value="ECO:0007669"/>
    <property type="project" value="EnsemblFungi"/>
</dbReference>
<dbReference type="GO" id="GO:0061908">
    <property type="term" value="C:phagophore"/>
    <property type="evidence" value="ECO:0007669"/>
    <property type="project" value="EnsemblFungi"/>
</dbReference>
<dbReference type="GO" id="GO:0000407">
    <property type="term" value="C:phagophore assembly site"/>
    <property type="evidence" value="ECO:0000318"/>
    <property type="project" value="GO_Central"/>
</dbReference>
<dbReference type="GO" id="GO:0034045">
    <property type="term" value="C:phagophore assembly site membrane"/>
    <property type="evidence" value="ECO:0007669"/>
    <property type="project" value="UniProtKB-SubCell"/>
</dbReference>
<dbReference type="GO" id="GO:0017128">
    <property type="term" value="F:phospholipid scramblase activity"/>
    <property type="evidence" value="ECO:0007669"/>
    <property type="project" value="EnsemblFungi"/>
</dbReference>
<dbReference type="GO" id="GO:0000423">
    <property type="term" value="P:mitophagy"/>
    <property type="evidence" value="ECO:0000318"/>
    <property type="project" value="GO_Central"/>
</dbReference>
<dbReference type="GO" id="GO:0034727">
    <property type="term" value="P:piecemeal microautophagy of the nucleus"/>
    <property type="evidence" value="ECO:0000318"/>
    <property type="project" value="GO_Central"/>
</dbReference>
<dbReference type="GO" id="GO:0034497">
    <property type="term" value="P:protein localization to phagophore assembly site"/>
    <property type="evidence" value="ECO:0000318"/>
    <property type="project" value="GO_Central"/>
</dbReference>
<dbReference type="GO" id="GO:0061709">
    <property type="term" value="P:reticulophagy"/>
    <property type="evidence" value="ECO:0000318"/>
    <property type="project" value="GO_Central"/>
</dbReference>
<dbReference type="InterPro" id="IPR007241">
    <property type="entry name" value="Autophagy-rel_prot_9"/>
</dbReference>
<dbReference type="PANTHER" id="PTHR13038">
    <property type="entry name" value="APG9 AUTOPHAGY 9"/>
    <property type="match status" value="1"/>
</dbReference>
<dbReference type="PANTHER" id="PTHR13038:SF10">
    <property type="entry name" value="AUTOPHAGY-RELATED PROTEIN 9"/>
    <property type="match status" value="1"/>
</dbReference>
<dbReference type="Pfam" id="PF04109">
    <property type="entry name" value="ATG9"/>
    <property type="match status" value="1"/>
</dbReference>
<feature type="chain" id="PRO_0000119825" description="Autophagy-related protein 9">
    <location>
        <begin position="1"/>
        <end position="951"/>
    </location>
</feature>
<feature type="topological domain" description="Cytoplasmic" evidence="5">
    <location>
        <begin position="1"/>
        <end position="240"/>
    </location>
</feature>
<feature type="transmembrane region" description="Helical" evidence="3">
    <location>
        <begin position="241"/>
        <end position="261"/>
    </location>
</feature>
<feature type="topological domain" description="Lumenal" evidence="5">
    <location>
        <begin position="262"/>
        <end position="289"/>
    </location>
</feature>
<feature type="transmembrane region" description="Helical" evidence="3">
    <location>
        <begin position="290"/>
        <end position="310"/>
    </location>
</feature>
<feature type="topological domain" description="Cytoplasmic" evidence="5">
    <location>
        <begin position="311"/>
        <end position="456"/>
    </location>
</feature>
<feature type="intramembrane region" evidence="1">
    <location>
        <begin position="457"/>
        <end position="477"/>
    </location>
</feature>
<feature type="topological domain" description="Cytoplasmic" evidence="5">
    <location>
        <begin position="478"/>
        <end position="542"/>
    </location>
</feature>
<feature type="transmembrane region" description="Helical" evidence="3">
    <location>
        <begin position="543"/>
        <end position="563"/>
    </location>
</feature>
<feature type="topological domain" description="Lumenal" evidence="5">
    <location>
        <begin position="564"/>
        <end position="578"/>
    </location>
</feature>
<feature type="transmembrane region" description="Helical" evidence="3">
    <location>
        <begin position="579"/>
        <end position="599"/>
    </location>
</feature>
<feature type="topological domain" description="Cytoplasmic" evidence="5">
    <location>
        <begin position="600"/>
        <end position="645"/>
    </location>
</feature>
<feature type="intramembrane region" evidence="1">
    <location>
        <begin position="646"/>
        <end position="666"/>
    </location>
</feature>
<feature type="topological domain" description="Cytoplasmic" evidence="5">
    <location>
        <begin position="667"/>
        <end position="951"/>
    </location>
</feature>
<feature type="region of interest" description="Disordered" evidence="4">
    <location>
        <begin position="1"/>
        <end position="54"/>
    </location>
</feature>
<feature type="region of interest" description="Disordered" evidence="4">
    <location>
        <begin position="72"/>
        <end position="186"/>
    </location>
</feature>
<feature type="region of interest" description="Disordered" evidence="4">
    <location>
        <begin position="810"/>
        <end position="919"/>
    </location>
</feature>
<feature type="compositionally biased region" description="Basic and acidic residues" evidence="4">
    <location>
        <begin position="23"/>
        <end position="39"/>
    </location>
</feature>
<feature type="compositionally biased region" description="Basic residues" evidence="4">
    <location>
        <begin position="93"/>
        <end position="103"/>
    </location>
</feature>
<feature type="compositionally biased region" description="Basic and acidic residues" evidence="4">
    <location>
        <begin position="104"/>
        <end position="114"/>
    </location>
</feature>
<feature type="compositionally biased region" description="Basic and acidic residues" evidence="4">
    <location>
        <begin position="128"/>
        <end position="138"/>
    </location>
</feature>
<feature type="compositionally biased region" description="Basic and acidic residues" evidence="4">
    <location>
        <begin position="171"/>
        <end position="180"/>
    </location>
</feature>
<proteinExistence type="inferred from homology"/>
<protein>
    <recommendedName>
        <fullName>Autophagy-related protein 9</fullName>
    </recommendedName>
</protein>
<accession>Q4WLT9</accession>